<organismHost>
    <name type="scientific">Equus caballus</name>
    <name type="common">Horse</name>
    <dbReference type="NCBI Taxonomy" id="9796"/>
</organismHost>
<protein>
    <recommendedName>
        <fullName evidence="1">Portal protein</fullName>
    </recommendedName>
</protein>
<accession>P28944</accession>
<accession>Q6S6U8</accession>
<name>PORTL_EHV1B</name>
<organism>
    <name type="scientific">Equine herpesvirus 1 (strain Ab4p)</name>
    <name type="common">EHV-1</name>
    <name type="synonym">Equine abortion virus</name>
    <dbReference type="NCBI Taxonomy" id="31520"/>
    <lineage>
        <taxon>Viruses</taxon>
        <taxon>Duplodnaviria</taxon>
        <taxon>Heunggongvirae</taxon>
        <taxon>Peploviricota</taxon>
        <taxon>Herviviricetes</taxon>
        <taxon>Herpesvirales</taxon>
        <taxon>Orthoherpesviridae</taxon>
        <taxon>Alphaherpesvirinae</taxon>
        <taxon>Varicellovirus</taxon>
        <taxon>Varicellovirus equidalpha1</taxon>
        <taxon>Equid alphaherpesvirus 1</taxon>
    </lineage>
</organism>
<reference key="1">
    <citation type="journal article" date="1992" name="Virology">
        <title>The DNA sequence of equine herpesvirus-1.</title>
        <authorList>
            <person name="Telford E.A.R."/>
            <person name="Watson M.S."/>
            <person name="McBride K."/>
            <person name="Davison A.J."/>
        </authorList>
    </citation>
    <scope>NUCLEOTIDE SEQUENCE [LARGE SCALE GENOMIC DNA]</scope>
</reference>
<sequence length="753" mass="83993">MSADSIEPKQKRLRYADANKGRKVERKNTPRFEATTGLQSPGEEEQISADGGWVLIHPTPKTMLFKEILMGELGYTEGQGVYNAIRSTEAAIRQIQTTILTNTLNATRYEDLAKDWQTHLDSRGVSAEEIAATYGMYSEGEAVRVAEQIFATWHRTLQMSLLDFVRSITACFSASEPDGTASFAKYIDWIACLGLIPLQRLKRAPGATVHPKLWRKLPTDVPSLESCVDERDLAGKLYVANSLLREGLEAVVELARCTASVAIMDYDRVNIFYHYTRREVVAIDSTTGKRGECLVLWQPIWKDGSVLFDSPLQRICGEVCNCHALREHAKLCQLLNTVPVKILVGRKKDEAQGPGWASKAVDKLMGEGEELHSSSAASRLVKLIVNMKSMRHIGDITETVRSYLNETSTNLLSGAQVDTSLPGFGQSGKTKQGGNMPVQEAFRTSVINGINGMLEGYVNNLFKTIEDLRTGNSGLLDQLRDRESEITHLREQLLRVSQAAADGSTQPGASSAALPGSGAKSGAGGLGHEVIDIRNLMGDDGYVANSFQSRYIPAYTADMERLSRLWDQELLRCFKMNRITNNQGQEMSVSYSNSSISLLLAPYFFSILRARHLGFLITHQEAYRSEEELCVAVFKKTRLEAYLTELSTLFVARVRNSIAALNSTKRDLPVNDNEAQSDEEQLGKPSDERYYEGRDRSASPQRDRGRNGRGYHKRRRFSNNYRRRSGLARDSSIRDRSQRGSRPTPLLHDHVGH</sequence>
<dbReference type="EMBL" id="AY665713">
    <property type="protein sequence ID" value="AAT67313.1"/>
    <property type="molecule type" value="Genomic_DNA"/>
</dbReference>
<dbReference type="PIR" id="B36801">
    <property type="entry name" value="WZBEE8"/>
</dbReference>
<dbReference type="SMR" id="P28944"/>
<dbReference type="KEGG" id="vg:2948564"/>
<dbReference type="Proteomes" id="UP000001189">
    <property type="component" value="Segment"/>
</dbReference>
<dbReference type="GO" id="GO:0042025">
    <property type="term" value="C:host cell nucleus"/>
    <property type="evidence" value="ECO:0007669"/>
    <property type="project" value="UniProtKB-SubCell"/>
</dbReference>
<dbReference type="GO" id="GO:0044423">
    <property type="term" value="C:virion component"/>
    <property type="evidence" value="ECO:0007669"/>
    <property type="project" value="UniProtKB-KW"/>
</dbReference>
<dbReference type="GO" id="GO:0051276">
    <property type="term" value="P:chromosome organization"/>
    <property type="evidence" value="ECO:0007669"/>
    <property type="project" value="InterPro"/>
</dbReference>
<dbReference type="HAMAP" id="MF_04012">
    <property type="entry name" value="HSV_PORTL"/>
    <property type="match status" value="1"/>
</dbReference>
<dbReference type="InterPro" id="IPR002660">
    <property type="entry name" value="Herpes_Portal"/>
</dbReference>
<dbReference type="Pfam" id="PF01763">
    <property type="entry name" value="Herpes_UL6"/>
    <property type="match status" value="1"/>
</dbReference>
<feature type="chain" id="PRO_0000115905" description="Portal protein">
    <location>
        <begin position="1"/>
        <end position="753"/>
    </location>
</feature>
<feature type="region of interest" description="Disordered" evidence="2">
    <location>
        <begin position="1"/>
        <end position="44"/>
    </location>
</feature>
<feature type="region of interest" description="Putative leucine zipper motif" evidence="1">
    <location>
        <begin position="454"/>
        <end position="475"/>
    </location>
</feature>
<feature type="region of interest" description="Disordered" evidence="2">
    <location>
        <begin position="498"/>
        <end position="523"/>
    </location>
</feature>
<feature type="region of interest" description="Disordered" evidence="2">
    <location>
        <begin position="668"/>
        <end position="753"/>
    </location>
</feature>
<feature type="compositionally biased region" description="Basic and acidic residues" evidence="2">
    <location>
        <begin position="1"/>
        <end position="30"/>
    </location>
</feature>
<feature type="compositionally biased region" description="Low complexity" evidence="2">
    <location>
        <begin position="507"/>
        <end position="518"/>
    </location>
</feature>
<feature type="compositionally biased region" description="Basic and acidic residues" evidence="2">
    <location>
        <begin position="681"/>
        <end position="706"/>
    </location>
</feature>
<feature type="compositionally biased region" description="Basic residues" evidence="2">
    <location>
        <begin position="707"/>
        <end position="726"/>
    </location>
</feature>
<feature type="disulfide bond" description="Interchain" evidence="1">
    <location>
        <position position="192"/>
    </location>
</feature>
<feature type="disulfide bond" description="Interchain" evidence="1">
    <location>
        <position position="293"/>
    </location>
</feature>
<keyword id="KW-1015">Disulfide bond</keyword>
<keyword id="KW-1048">Host nucleus</keyword>
<keyword id="KW-1185">Reference proteome</keyword>
<keyword id="KW-0231">Viral genome packaging</keyword>
<keyword id="KW-1188">Viral release from host cell</keyword>
<keyword id="KW-0946">Virion</keyword>
<evidence type="ECO:0000255" key="1">
    <source>
        <dbReference type="HAMAP-Rule" id="MF_04012"/>
    </source>
</evidence>
<evidence type="ECO:0000256" key="2">
    <source>
        <dbReference type="SAM" id="MobiDB-lite"/>
    </source>
</evidence>
<comment type="function">
    <text evidence="1">Forms a portal in the viral capsid through which viral DNA is translocated during DNA packaging. Assembles as a dodecamer at a single fivefold axe of the T=16 icosahedric capsid. Binds to the molecular motor that translocates the viral DNA, termed terminase.</text>
</comment>
<comment type="subunit">
    <text evidence="1">Homododecamerizes. Interacts with terminase subunits TRM1 and TRM3.</text>
</comment>
<comment type="subcellular location">
    <subcellularLocation>
        <location evidence="1">Virion</location>
    </subcellularLocation>
    <subcellularLocation>
        <location evidence="1">Host nucleus</location>
    </subcellularLocation>
</comment>
<comment type="similarity">
    <text evidence="1">Belongs to the herpesviridae portal protein family.</text>
</comment>
<gene>
    <name type="ordered locus">56</name>
</gene>
<proteinExistence type="inferred from homology"/>